<keyword id="KW-1003">Cell membrane</keyword>
<keyword id="KW-0472">Membrane</keyword>
<keyword id="KW-0808">Transferase</keyword>
<keyword id="KW-0812">Transmembrane</keyword>
<keyword id="KW-1133">Transmembrane helix</keyword>
<sequence length="259" mass="29420">MINPIALKCGPLAIHWYALCILSGLVLAVYLASKEAPKKGISSDAIFDFILIAFPLAIVGARIYYVIFEWSYYVKHLDEIIAIWNGGIAIYGGLITGALVLLAYCYNKVLNPIHFLDIAAPSVMVAQAIGRWGNFINQEAYGKAVSQLNYLPSFIQKQMFIEGSYRIPTFLYESLWNLLGFVIIMMWRRKPKSLLDGEIFAFYLIWYGSGRLVIEGMRTDSLMFLGIRISQYVSALLIIIGLIFVIKRRRQKGISYYQE</sequence>
<gene>
    <name evidence="1" type="primary">lgt</name>
    <name type="ordered locus">Spy49_0495</name>
</gene>
<name>LGT_STRPZ</name>
<proteinExistence type="inferred from homology"/>
<organism>
    <name type="scientific">Streptococcus pyogenes serotype M49 (strain NZ131)</name>
    <dbReference type="NCBI Taxonomy" id="471876"/>
    <lineage>
        <taxon>Bacteria</taxon>
        <taxon>Bacillati</taxon>
        <taxon>Bacillota</taxon>
        <taxon>Bacilli</taxon>
        <taxon>Lactobacillales</taxon>
        <taxon>Streptococcaceae</taxon>
        <taxon>Streptococcus</taxon>
    </lineage>
</organism>
<reference key="1">
    <citation type="journal article" date="2008" name="J. Bacteriol.">
        <title>Genome sequence of a nephritogenic and highly transformable M49 strain of Streptococcus pyogenes.</title>
        <authorList>
            <person name="McShan W.M."/>
            <person name="Ferretti J.J."/>
            <person name="Karasawa T."/>
            <person name="Suvorov A.N."/>
            <person name="Lin S."/>
            <person name="Qin B."/>
            <person name="Jia H."/>
            <person name="Kenton S."/>
            <person name="Najar F."/>
            <person name="Wu H."/>
            <person name="Scott J."/>
            <person name="Roe B.A."/>
            <person name="Savic D.J."/>
        </authorList>
    </citation>
    <scope>NUCLEOTIDE SEQUENCE [LARGE SCALE GENOMIC DNA]</scope>
    <source>
        <strain>NZ131</strain>
    </source>
</reference>
<comment type="function">
    <text evidence="1">Catalyzes the transfer of the diacylglyceryl group from phosphatidylglycerol to the sulfhydryl group of the N-terminal cysteine of a prolipoprotein, the first step in the formation of mature lipoproteins.</text>
</comment>
<comment type="catalytic activity">
    <reaction evidence="1">
        <text>L-cysteinyl-[prolipoprotein] + a 1,2-diacyl-sn-glycero-3-phospho-(1'-sn-glycerol) = an S-1,2-diacyl-sn-glyceryl-L-cysteinyl-[prolipoprotein] + sn-glycerol 1-phosphate + H(+)</text>
        <dbReference type="Rhea" id="RHEA:56712"/>
        <dbReference type="Rhea" id="RHEA-COMP:14679"/>
        <dbReference type="Rhea" id="RHEA-COMP:14680"/>
        <dbReference type="ChEBI" id="CHEBI:15378"/>
        <dbReference type="ChEBI" id="CHEBI:29950"/>
        <dbReference type="ChEBI" id="CHEBI:57685"/>
        <dbReference type="ChEBI" id="CHEBI:64716"/>
        <dbReference type="ChEBI" id="CHEBI:140658"/>
        <dbReference type="EC" id="2.5.1.145"/>
    </reaction>
</comment>
<comment type="pathway">
    <text evidence="1">Protein modification; lipoprotein biosynthesis (diacylglyceryl transfer).</text>
</comment>
<comment type="subcellular location">
    <subcellularLocation>
        <location evidence="1">Cell membrane</location>
        <topology evidence="1">Multi-pass membrane protein</topology>
    </subcellularLocation>
</comment>
<comment type="similarity">
    <text evidence="1">Belongs to the Lgt family.</text>
</comment>
<protein>
    <recommendedName>
        <fullName evidence="1">Phosphatidylglycerol--prolipoprotein diacylglyceryl transferase</fullName>
        <ecNumber evidence="1">2.5.1.145</ecNumber>
    </recommendedName>
</protein>
<evidence type="ECO:0000255" key="1">
    <source>
        <dbReference type="HAMAP-Rule" id="MF_01147"/>
    </source>
</evidence>
<accession>B5XKG1</accession>
<dbReference type="EC" id="2.5.1.145" evidence="1"/>
<dbReference type="EMBL" id="CP000829">
    <property type="protein sequence ID" value="ACI60823.1"/>
    <property type="molecule type" value="Genomic_DNA"/>
</dbReference>
<dbReference type="SMR" id="B5XKG1"/>
<dbReference type="KEGG" id="soz:Spy49_0495"/>
<dbReference type="HOGENOM" id="CLU_013386_0_1_9"/>
<dbReference type="UniPathway" id="UPA00664"/>
<dbReference type="Proteomes" id="UP000001039">
    <property type="component" value="Chromosome"/>
</dbReference>
<dbReference type="GO" id="GO:0005886">
    <property type="term" value="C:plasma membrane"/>
    <property type="evidence" value="ECO:0007669"/>
    <property type="project" value="UniProtKB-SubCell"/>
</dbReference>
<dbReference type="GO" id="GO:0008961">
    <property type="term" value="F:phosphatidylglycerol-prolipoprotein diacylglyceryl transferase activity"/>
    <property type="evidence" value="ECO:0007669"/>
    <property type="project" value="UniProtKB-UniRule"/>
</dbReference>
<dbReference type="GO" id="GO:0042158">
    <property type="term" value="P:lipoprotein biosynthetic process"/>
    <property type="evidence" value="ECO:0007669"/>
    <property type="project" value="UniProtKB-UniRule"/>
</dbReference>
<dbReference type="HAMAP" id="MF_01147">
    <property type="entry name" value="Lgt"/>
    <property type="match status" value="1"/>
</dbReference>
<dbReference type="InterPro" id="IPR001640">
    <property type="entry name" value="Lgt"/>
</dbReference>
<dbReference type="NCBIfam" id="TIGR00544">
    <property type="entry name" value="lgt"/>
    <property type="match status" value="1"/>
</dbReference>
<dbReference type="PANTHER" id="PTHR30589:SF0">
    <property type="entry name" value="PHOSPHATIDYLGLYCEROL--PROLIPOPROTEIN DIACYLGLYCERYL TRANSFERASE"/>
    <property type="match status" value="1"/>
</dbReference>
<dbReference type="PANTHER" id="PTHR30589">
    <property type="entry name" value="PROLIPOPROTEIN DIACYLGLYCERYL TRANSFERASE"/>
    <property type="match status" value="1"/>
</dbReference>
<dbReference type="Pfam" id="PF01790">
    <property type="entry name" value="LGT"/>
    <property type="match status" value="1"/>
</dbReference>
<dbReference type="PROSITE" id="PS01311">
    <property type="entry name" value="LGT"/>
    <property type="match status" value="1"/>
</dbReference>
<feature type="chain" id="PRO_1000137466" description="Phosphatidylglycerol--prolipoprotein diacylglyceryl transferase">
    <location>
        <begin position="1"/>
        <end position="259"/>
    </location>
</feature>
<feature type="transmembrane region" description="Helical" evidence="1">
    <location>
        <begin position="12"/>
        <end position="32"/>
    </location>
</feature>
<feature type="transmembrane region" description="Helical" evidence="1">
    <location>
        <begin position="41"/>
        <end position="61"/>
    </location>
</feature>
<feature type="transmembrane region" description="Helical" evidence="1">
    <location>
        <begin position="80"/>
        <end position="100"/>
    </location>
</feature>
<feature type="transmembrane region" description="Helical" evidence="1">
    <location>
        <begin position="109"/>
        <end position="129"/>
    </location>
</feature>
<feature type="transmembrane region" description="Helical" evidence="1">
    <location>
        <begin position="167"/>
        <end position="187"/>
    </location>
</feature>
<feature type="transmembrane region" description="Helical" evidence="1">
    <location>
        <begin position="194"/>
        <end position="214"/>
    </location>
</feature>
<feature type="transmembrane region" description="Helical" evidence="1">
    <location>
        <begin position="226"/>
        <end position="246"/>
    </location>
</feature>
<feature type="binding site" evidence="1">
    <location>
        <position position="131"/>
    </location>
    <ligand>
        <name>a 1,2-diacyl-sn-glycero-3-phospho-(1'-sn-glycerol)</name>
        <dbReference type="ChEBI" id="CHEBI:64716"/>
    </ligand>
</feature>